<dbReference type="EMBL" id="CP000124">
    <property type="protein sequence ID" value="ABA48081.1"/>
    <property type="molecule type" value="Genomic_DNA"/>
</dbReference>
<dbReference type="RefSeq" id="WP_004197638.1">
    <property type="nucleotide sequence ID" value="NC_007434.1"/>
</dbReference>
<dbReference type="SMR" id="Q3JQ68"/>
<dbReference type="EnsemblBacteria" id="ABA48081">
    <property type="protein sequence ID" value="ABA48081"/>
    <property type="gene ID" value="BURPS1710b_2904"/>
</dbReference>
<dbReference type="GeneID" id="98102461"/>
<dbReference type="KEGG" id="bpm:BURPS1710b_2904"/>
<dbReference type="HOGENOM" id="CLU_108696_5_1_4"/>
<dbReference type="UniPathway" id="UPA00094"/>
<dbReference type="Proteomes" id="UP000002700">
    <property type="component" value="Chromosome I"/>
</dbReference>
<dbReference type="GO" id="GO:0005829">
    <property type="term" value="C:cytosol"/>
    <property type="evidence" value="ECO:0007669"/>
    <property type="project" value="TreeGrafter"/>
</dbReference>
<dbReference type="GO" id="GO:0016020">
    <property type="term" value="C:membrane"/>
    <property type="evidence" value="ECO:0007669"/>
    <property type="project" value="GOC"/>
</dbReference>
<dbReference type="GO" id="GO:0000035">
    <property type="term" value="F:acyl binding"/>
    <property type="evidence" value="ECO:0007669"/>
    <property type="project" value="TreeGrafter"/>
</dbReference>
<dbReference type="GO" id="GO:0000036">
    <property type="term" value="F:acyl carrier activity"/>
    <property type="evidence" value="ECO:0007669"/>
    <property type="project" value="UniProtKB-UniRule"/>
</dbReference>
<dbReference type="GO" id="GO:0009245">
    <property type="term" value="P:lipid A biosynthetic process"/>
    <property type="evidence" value="ECO:0007669"/>
    <property type="project" value="TreeGrafter"/>
</dbReference>
<dbReference type="FunFam" id="1.10.1200.10:FF:000001">
    <property type="entry name" value="Acyl carrier protein"/>
    <property type="match status" value="1"/>
</dbReference>
<dbReference type="Gene3D" id="1.10.1200.10">
    <property type="entry name" value="ACP-like"/>
    <property type="match status" value="1"/>
</dbReference>
<dbReference type="HAMAP" id="MF_01217">
    <property type="entry name" value="Acyl_carrier"/>
    <property type="match status" value="1"/>
</dbReference>
<dbReference type="InterPro" id="IPR003231">
    <property type="entry name" value="ACP"/>
</dbReference>
<dbReference type="InterPro" id="IPR036736">
    <property type="entry name" value="ACP-like_sf"/>
</dbReference>
<dbReference type="InterPro" id="IPR009081">
    <property type="entry name" value="PP-bd_ACP"/>
</dbReference>
<dbReference type="InterPro" id="IPR006162">
    <property type="entry name" value="Ppantetheine_attach_site"/>
</dbReference>
<dbReference type="NCBIfam" id="TIGR00517">
    <property type="entry name" value="acyl_carrier"/>
    <property type="match status" value="1"/>
</dbReference>
<dbReference type="NCBIfam" id="NF002148">
    <property type="entry name" value="PRK00982.1-2"/>
    <property type="match status" value="1"/>
</dbReference>
<dbReference type="NCBIfam" id="NF002149">
    <property type="entry name" value="PRK00982.1-3"/>
    <property type="match status" value="1"/>
</dbReference>
<dbReference type="NCBIfam" id="NF002150">
    <property type="entry name" value="PRK00982.1-4"/>
    <property type="match status" value="1"/>
</dbReference>
<dbReference type="NCBIfam" id="NF002151">
    <property type="entry name" value="PRK00982.1-5"/>
    <property type="match status" value="1"/>
</dbReference>
<dbReference type="PANTHER" id="PTHR20863">
    <property type="entry name" value="ACYL CARRIER PROTEIN"/>
    <property type="match status" value="1"/>
</dbReference>
<dbReference type="PANTHER" id="PTHR20863:SF76">
    <property type="entry name" value="CARRIER DOMAIN-CONTAINING PROTEIN"/>
    <property type="match status" value="1"/>
</dbReference>
<dbReference type="Pfam" id="PF00550">
    <property type="entry name" value="PP-binding"/>
    <property type="match status" value="1"/>
</dbReference>
<dbReference type="SUPFAM" id="SSF47336">
    <property type="entry name" value="ACP-like"/>
    <property type="match status" value="1"/>
</dbReference>
<dbReference type="PROSITE" id="PS50075">
    <property type="entry name" value="CARRIER"/>
    <property type="match status" value="1"/>
</dbReference>
<dbReference type="PROSITE" id="PS00012">
    <property type="entry name" value="PHOSPHOPANTETHEINE"/>
    <property type="match status" value="1"/>
</dbReference>
<reference key="1">
    <citation type="journal article" date="2010" name="Genome Biol. Evol.">
        <title>Continuing evolution of Burkholderia mallei through genome reduction and large-scale rearrangements.</title>
        <authorList>
            <person name="Losada L."/>
            <person name="Ronning C.M."/>
            <person name="DeShazer D."/>
            <person name="Woods D."/>
            <person name="Fedorova N."/>
            <person name="Kim H.S."/>
            <person name="Shabalina S.A."/>
            <person name="Pearson T.R."/>
            <person name="Brinkac L."/>
            <person name="Tan P."/>
            <person name="Nandi T."/>
            <person name="Crabtree J."/>
            <person name="Badger J."/>
            <person name="Beckstrom-Sternberg S."/>
            <person name="Saqib M."/>
            <person name="Schutzer S.E."/>
            <person name="Keim P."/>
            <person name="Nierman W.C."/>
        </authorList>
    </citation>
    <scope>NUCLEOTIDE SEQUENCE [LARGE SCALE GENOMIC DNA]</scope>
    <source>
        <strain>1710b</strain>
    </source>
</reference>
<comment type="function">
    <text evidence="1">Carrier of the growing fatty acid chain in fatty acid biosynthesis.</text>
</comment>
<comment type="pathway">
    <text evidence="1">Lipid metabolism; fatty acid biosynthesis.</text>
</comment>
<comment type="subcellular location">
    <subcellularLocation>
        <location evidence="1">Cytoplasm</location>
    </subcellularLocation>
</comment>
<comment type="PTM">
    <text evidence="1">4'-phosphopantetheine is transferred from CoA to a specific serine of apo-ACP by AcpS. This modification is essential for activity because fatty acids are bound in thioester linkage to the sulfhydryl of the prosthetic group.</text>
</comment>
<comment type="similarity">
    <text evidence="1">Belongs to the acyl carrier protein (ACP) family.</text>
</comment>
<keyword id="KW-0963">Cytoplasm</keyword>
<keyword id="KW-0275">Fatty acid biosynthesis</keyword>
<keyword id="KW-0276">Fatty acid metabolism</keyword>
<keyword id="KW-0444">Lipid biosynthesis</keyword>
<keyword id="KW-0443">Lipid metabolism</keyword>
<keyword id="KW-0596">Phosphopantetheine</keyword>
<keyword id="KW-0597">Phosphoprotein</keyword>
<accession>Q3JQ68</accession>
<name>ACP_BURP1</name>
<feature type="chain" id="PRO_1000066575" description="Acyl carrier protein">
    <location>
        <begin position="1"/>
        <end position="79"/>
    </location>
</feature>
<feature type="domain" description="Carrier" evidence="2">
    <location>
        <begin position="2"/>
        <end position="77"/>
    </location>
</feature>
<feature type="modified residue" description="O-(pantetheine 4'-phosphoryl)serine" evidence="2">
    <location>
        <position position="37"/>
    </location>
</feature>
<gene>
    <name evidence="1" type="primary">acpP</name>
    <name type="ordered locus">BURPS1710b_2904</name>
</gene>
<organism>
    <name type="scientific">Burkholderia pseudomallei (strain 1710b)</name>
    <dbReference type="NCBI Taxonomy" id="320372"/>
    <lineage>
        <taxon>Bacteria</taxon>
        <taxon>Pseudomonadati</taxon>
        <taxon>Pseudomonadota</taxon>
        <taxon>Betaproteobacteria</taxon>
        <taxon>Burkholderiales</taxon>
        <taxon>Burkholderiaceae</taxon>
        <taxon>Burkholderia</taxon>
        <taxon>pseudomallei group</taxon>
    </lineage>
</organism>
<protein>
    <recommendedName>
        <fullName evidence="1">Acyl carrier protein</fullName>
        <shortName evidence="1">ACP</shortName>
    </recommendedName>
</protein>
<sequence length="79" mass="8712">MDNIEQRVKKIVAEQLGVAEAEIKNEASFVNDLGADSLDTVELVMALEDEFGMEIPDEEAEKITTVQQAIDYARANVKA</sequence>
<proteinExistence type="inferred from homology"/>
<evidence type="ECO:0000255" key="1">
    <source>
        <dbReference type="HAMAP-Rule" id="MF_01217"/>
    </source>
</evidence>
<evidence type="ECO:0000255" key="2">
    <source>
        <dbReference type="PROSITE-ProRule" id="PRU00258"/>
    </source>
</evidence>